<gene>
    <name type="primary">KEX1</name>
    <name type="ORF">MAC_03847</name>
</gene>
<protein>
    <recommendedName>
        <fullName>Pheromone-processing carboxypeptidase KEX1</fullName>
        <ecNumber>3.4.16.6</ecNumber>
    </recommendedName>
    <alternativeName>
        <fullName>Carboxypeptidase D</fullName>
    </alternativeName>
</protein>
<keyword id="KW-0053">Apoptosis</keyword>
<keyword id="KW-0121">Carboxypeptidase</keyword>
<keyword id="KW-0325">Glycoprotein</keyword>
<keyword id="KW-0333">Golgi apparatus</keyword>
<keyword id="KW-0378">Hydrolase</keyword>
<keyword id="KW-0472">Membrane</keyword>
<keyword id="KW-0645">Protease</keyword>
<keyword id="KW-1185">Reference proteome</keyword>
<keyword id="KW-0732">Signal</keyword>
<keyword id="KW-0812">Transmembrane</keyword>
<keyword id="KW-1133">Transmembrane helix</keyword>
<comment type="function">
    <text evidence="1">Protease with a carboxypeptidase B-like function involved in the C-terminal processing of the lysine and arginine residues from protein precursors. Promotes cell fusion and is involved in the programmed cell death (By similarity).</text>
</comment>
<comment type="catalytic activity">
    <reaction>
        <text>Preferential release of a C-terminal arginine or lysine residue.</text>
        <dbReference type="EC" id="3.4.16.6"/>
    </reaction>
</comment>
<comment type="subcellular location">
    <subcellularLocation>
        <location evidence="1">Golgi apparatus</location>
        <location evidence="1">trans-Golgi network membrane</location>
        <topology evidence="1">Single-pass type I membrane protein</topology>
    </subcellularLocation>
</comment>
<comment type="similarity">
    <text evidence="4">Belongs to the peptidase S10 family.</text>
</comment>
<accession>E9E1Z2</accession>
<reference key="1">
    <citation type="journal article" date="2011" name="PLoS Genet.">
        <title>Genome sequencing and comparative transcriptomics of the model entomopathogenic fungi Metarhizium anisopliae and M. acridum.</title>
        <authorList>
            <person name="Gao Q."/>
            <person name="Jin K."/>
            <person name="Ying S.-H."/>
            <person name="Zhang Y."/>
            <person name="Xiao G."/>
            <person name="Shang Y."/>
            <person name="Duan Z."/>
            <person name="Hu X."/>
            <person name="Xie X.-Q."/>
            <person name="Zhou G."/>
            <person name="Peng G."/>
            <person name="Luo Z."/>
            <person name="Huang W."/>
            <person name="Wang B."/>
            <person name="Fang W."/>
            <person name="Wang S."/>
            <person name="Zhong Y."/>
            <person name="Ma L.-J."/>
            <person name="St Leger R.J."/>
            <person name="Zhao G.-P."/>
            <person name="Pei Y."/>
            <person name="Feng M.-G."/>
            <person name="Xia Y."/>
            <person name="Wang C."/>
        </authorList>
    </citation>
    <scope>NUCLEOTIDE SEQUENCE [LARGE SCALE GENOMIC DNA]</scope>
    <source>
        <strain>CQMa 102</strain>
    </source>
</reference>
<sequence length="616" mass="69034">MAPRFSWSFATSWHALAILALWPVSTLAGDKSAADYYVRELPGLPKDSPPIKMHAGHIEVTPETNGNLFFWHFQNNHIANRQRTVVWLNGGPGCSSEDGALMEVGPYRVTKDNALTLNNGTWNEFANLLFVDNPVGTGFSYVDTNSYIHGLNAMATQFITFLEKFFALFPEYESDDLYFAGESYAGQHIPYIAKAILDRNKLKSRAETWKLSGLLIGNGWISPQDQSSAYLKFSLEKGLIEKGSDNAQQLQHMQRICDKEMSINPGHVDYPECESILNKILELTREGSGDQACINMYDVRLRDSAPSCGMNWPPDLKYVGPYLRQPQVISALNLDKQRNTGWQECNSMVNANFRNQNATASISLLPDILKEVPILLFSGAEDLICNHVGTEELISNLAWNEGKGFEVTPGNWAPRRQWTFEGEVAGFWQEARNLTYVLFHNASHMVPFDYPRRSRDMLDRFMKVDISSIGGQPSDSRIDGEKGPDTSVGGAKNNTQQHEEETKQKLNEAKWHAYQRSGEVVLVIVIIAASVWGYFVWRQRRKGAAYSALQNDEAAGQSRTGLAAFHDRQSDRDLEAAAFDETTVDNIPLQESIGRGESKYSIGDDSDEEEEGTTKT</sequence>
<evidence type="ECO:0000250" key="1"/>
<evidence type="ECO:0000255" key="2"/>
<evidence type="ECO:0000256" key="3">
    <source>
        <dbReference type="SAM" id="MobiDB-lite"/>
    </source>
</evidence>
<evidence type="ECO:0000305" key="4"/>
<proteinExistence type="inferred from homology"/>
<feature type="signal peptide" evidence="2">
    <location>
        <begin position="1"/>
        <end position="28"/>
    </location>
</feature>
<feature type="chain" id="PRO_0000411926" description="Pheromone-processing carboxypeptidase KEX1">
    <location>
        <begin position="29"/>
        <end position="616"/>
    </location>
</feature>
<feature type="topological domain" description="Lumenal" evidence="2">
    <location>
        <begin position="29"/>
        <end position="516"/>
    </location>
</feature>
<feature type="transmembrane region" description="Helical" evidence="2">
    <location>
        <begin position="517"/>
        <end position="537"/>
    </location>
</feature>
<feature type="topological domain" description="Cytoplasmic" evidence="2">
    <location>
        <begin position="538"/>
        <end position="616"/>
    </location>
</feature>
<feature type="region of interest" description="Disordered" evidence="3">
    <location>
        <begin position="468"/>
        <end position="504"/>
    </location>
</feature>
<feature type="region of interest" description="Disordered" evidence="3">
    <location>
        <begin position="577"/>
        <end position="616"/>
    </location>
</feature>
<feature type="compositionally biased region" description="Acidic residues" evidence="3">
    <location>
        <begin position="604"/>
        <end position="616"/>
    </location>
</feature>
<feature type="active site" evidence="1">
    <location>
        <position position="183"/>
    </location>
</feature>
<feature type="active site" evidence="1">
    <location>
        <position position="382"/>
    </location>
</feature>
<feature type="active site" evidence="1">
    <location>
        <position position="444"/>
    </location>
</feature>
<feature type="glycosylation site" description="N-linked (GlcNAc...) asparagine" evidence="2">
    <location>
        <position position="119"/>
    </location>
</feature>
<feature type="glycosylation site" description="N-linked (GlcNAc...) asparagine" evidence="2">
    <location>
        <position position="357"/>
    </location>
</feature>
<feature type="glycosylation site" description="N-linked (GlcNAc...) asparagine" evidence="2">
    <location>
        <position position="433"/>
    </location>
</feature>
<feature type="glycosylation site" description="N-linked (GlcNAc...) asparagine" evidence="2">
    <location>
        <position position="441"/>
    </location>
</feature>
<feature type="glycosylation site" description="N-linked (GlcNAc...) asparagine" evidence="2">
    <location>
        <position position="493"/>
    </location>
</feature>
<dbReference type="EC" id="3.4.16.6"/>
<dbReference type="EMBL" id="GL698493">
    <property type="protein sequence ID" value="EFY90089.1"/>
    <property type="molecule type" value="Genomic_DNA"/>
</dbReference>
<dbReference type="SMR" id="E9E1Z2"/>
<dbReference type="FunCoup" id="E9E1Z2">
    <property type="interactions" value="116"/>
</dbReference>
<dbReference type="STRING" id="655827.E9E1Z2"/>
<dbReference type="ESTHER" id="metaq-kex1">
    <property type="family name" value="Carboxypeptidase_S10"/>
</dbReference>
<dbReference type="GlyCosmos" id="E9E1Z2">
    <property type="glycosylation" value="5 sites, No reported glycans"/>
</dbReference>
<dbReference type="GeneID" id="19248158"/>
<dbReference type="KEGG" id="maw:19248158"/>
<dbReference type="eggNOG" id="KOG1282">
    <property type="taxonomic scope" value="Eukaryota"/>
</dbReference>
<dbReference type="HOGENOM" id="CLU_008523_11_0_1"/>
<dbReference type="InParanoid" id="E9E1Z2"/>
<dbReference type="OMA" id="EMADQFV"/>
<dbReference type="OrthoDB" id="443318at2759"/>
<dbReference type="Proteomes" id="UP000002499">
    <property type="component" value="Unassembled WGS sequence"/>
</dbReference>
<dbReference type="GO" id="GO:0016020">
    <property type="term" value="C:membrane"/>
    <property type="evidence" value="ECO:0007669"/>
    <property type="project" value="UniProtKB-KW"/>
</dbReference>
<dbReference type="GO" id="GO:0005802">
    <property type="term" value="C:trans-Golgi network"/>
    <property type="evidence" value="ECO:0007669"/>
    <property type="project" value="TreeGrafter"/>
</dbReference>
<dbReference type="GO" id="GO:0004185">
    <property type="term" value="F:serine-type carboxypeptidase activity"/>
    <property type="evidence" value="ECO:0007669"/>
    <property type="project" value="UniProtKB-EC"/>
</dbReference>
<dbReference type="GO" id="GO:0006915">
    <property type="term" value="P:apoptotic process"/>
    <property type="evidence" value="ECO:0007669"/>
    <property type="project" value="UniProtKB-KW"/>
</dbReference>
<dbReference type="GO" id="GO:0006508">
    <property type="term" value="P:proteolysis"/>
    <property type="evidence" value="ECO:0007669"/>
    <property type="project" value="UniProtKB-KW"/>
</dbReference>
<dbReference type="FunFam" id="3.40.50.1820:FF:000121">
    <property type="entry name" value="Carboxypeptidase D"/>
    <property type="match status" value="1"/>
</dbReference>
<dbReference type="Gene3D" id="3.40.50.1820">
    <property type="entry name" value="alpha/beta hydrolase"/>
    <property type="match status" value="1"/>
</dbReference>
<dbReference type="InterPro" id="IPR029058">
    <property type="entry name" value="AB_hydrolase_fold"/>
</dbReference>
<dbReference type="InterPro" id="IPR001563">
    <property type="entry name" value="Peptidase_S10"/>
</dbReference>
<dbReference type="PANTHER" id="PTHR11802:SF190">
    <property type="entry name" value="PHEROMONE-PROCESSING CARBOXYPEPTIDASE KEX1"/>
    <property type="match status" value="1"/>
</dbReference>
<dbReference type="PANTHER" id="PTHR11802">
    <property type="entry name" value="SERINE PROTEASE FAMILY S10 SERINE CARBOXYPEPTIDASE"/>
    <property type="match status" value="1"/>
</dbReference>
<dbReference type="Pfam" id="PF00450">
    <property type="entry name" value="Peptidase_S10"/>
    <property type="match status" value="1"/>
</dbReference>
<dbReference type="PRINTS" id="PR00724">
    <property type="entry name" value="CRBOXYPTASEC"/>
</dbReference>
<dbReference type="SUPFAM" id="SSF53474">
    <property type="entry name" value="alpha/beta-Hydrolases"/>
    <property type="match status" value="1"/>
</dbReference>
<name>KEX1_METAQ</name>
<organism>
    <name type="scientific">Metarhizium acridum (strain CQMa 102)</name>
    <dbReference type="NCBI Taxonomy" id="655827"/>
    <lineage>
        <taxon>Eukaryota</taxon>
        <taxon>Fungi</taxon>
        <taxon>Dikarya</taxon>
        <taxon>Ascomycota</taxon>
        <taxon>Pezizomycotina</taxon>
        <taxon>Sordariomycetes</taxon>
        <taxon>Hypocreomycetidae</taxon>
        <taxon>Hypocreales</taxon>
        <taxon>Clavicipitaceae</taxon>
        <taxon>Metarhizium</taxon>
    </lineage>
</organism>